<organism>
    <name type="scientific">Pseudomonas syringae pv. syringae (strain B728a)</name>
    <dbReference type="NCBI Taxonomy" id="205918"/>
    <lineage>
        <taxon>Bacteria</taxon>
        <taxon>Pseudomonadati</taxon>
        <taxon>Pseudomonadota</taxon>
        <taxon>Gammaproteobacteria</taxon>
        <taxon>Pseudomonadales</taxon>
        <taxon>Pseudomonadaceae</taxon>
        <taxon>Pseudomonas</taxon>
        <taxon>Pseudomonas syringae</taxon>
    </lineage>
</organism>
<keyword id="KW-0067">ATP-binding</keyword>
<keyword id="KW-0119">Carbohydrate metabolism</keyword>
<keyword id="KW-0418">Kinase</keyword>
<keyword id="KW-0511">Multifunctional enzyme</keyword>
<keyword id="KW-0547">Nucleotide-binding</keyword>
<keyword id="KW-0548">Nucleotidyltransferase</keyword>
<keyword id="KW-0808">Transferase</keyword>
<reference key="1">
    <citation type="journal article" date="2005" name="Proc. Natl. Acad. Sci. U.S.A.">
        <title>Comparison of the complete genome sequences of Pseudomonas syringae pv. syringae B728a and pv. tomato DC3000.</title>
        <authorList>
            <person name="Feil H."/>
            <person name="Feil W.S."/>
            <person name="Chain P."/>
            <person name="Larimer F."/>
            <person name="Dibartolo G."/>
            <person name="Copeland A."/>
            <person name="Lykidis A."/>
            <person name="Trong S."/>
            <person name="Nolan M."/>
            <person name="Goltsman E."/>
            <person name="Thiel J."/>
            <person name="Malfatti S."/>
            <person name="Loper J.E."/>
            <person name="Lapidus A."/>
            <person name="Detter J.C."/>
            <person name="Land M."/>
            <person name="Richardson P.M."/>
            <person name="Kyrpides N.C."/>
            <person name="Ivanova N."/>
            <person name="Lindow S.E."/>
        </authorList>
    </citation>
    <scope>NUCLEOTIDE SEQUENCE [LARGE SCALE GENOMIC DNA]</scope>
    <source>
        <strain>B728a</strain>
    </source>
</reference>
<protein>
    <recommendedName>
        <fullName evidence="1">Bifunctional protein HldE</fullName>
    </recommendedName>
    <domain>
        <recommendedName>
            <fullName evidence="1">D-beta-D-heptose 7-phosphate kinase</fullName>
            <ecNumber evidence="1">2.7.1.167</ecNumber>
        </recommendedName>
        <alternativeName>
            <fullName evidence="1">D-beta-D-heptose 7-phosphotransferase</fullName>
        </alternativeName>
        <alternativeName>
            <fullName evidence="1">D-glycero-beta-D-manno-heptose-7-phosphate kinase</fullName>
        </alternativeName>
    </domain>
    <domain>
        <recommendedName>
            <fullName evidence="1">D-beta-D-heptose 1-phosphate adenylyltransferase</fullName>
            <ecNumber evidence="1">2.7.7.70</ecNumber>
        </recommendedName>
        <alternativeName>
            <fullName evidence="1">D-glycero-beta-D-manno-heptose 1-phosphate adenylyltransferase</fullName>
        </alternativeName>
    </domain>
</protein>
<name>HLDE_PSEU2</name>
<proteinExistence type="inferred from homology"/>
<comment type="function">
    <text evidence="1">Catalyzes the phosphorylation of D-glycero-D-manno-heptose 7-phosphate at the C-1 position to selectively form D-glycero-beta-D-manno-heptose-1,7-bisphosphate.</text>
</comment>
<comment type="function">
    <text evidence="1">Catalyzes the ADP transfer from ATP to D-glycero-beta-D-manno-heptose 1-phosphate, yielding ADP-D-glycero-beta-D-manno-heptose.</text>
</comment>
<comment type="catalytic activity">
    <reaction evidence="1">
        <text>D-glycero-beta-D-manno-heptose 7-phosphate + ATP = D-glycero-beta-D-manno-heptose 1,7-bisphosphate + ADP + H(+)</text>
        <dbReference type="Rhea" id="RHEA:27473"/>
        <dbReference type="ChEBI" id="CHEBI:15378"/>
        <dbReference type="ChEBI" id="CHEBI:30616"/>
        <dbReference type="ChEBI" id="CHEBI:60204"/>
        <dbReference type="ChEBI" id="CHEBI:60208"/>
        <dbReference type="ChEBI" id="CHEBI:456216"/>
        <dbReference type="EC" id="2.7.1.167"/>
    </reaction>
</comment>
<comment type="catalytic activity">
    <reaction evidence="1">
        <text>D-glycero-beta-D-manno-heptose 1-phosphate + ATP + H(+) = ADP-D-glycero-beta-D-manno-heptose + diphosphate</text>
        <dbReference type="Rhea" id="RHEA:27465"/>
        <dbReference type="ChEBI" id="CHEBI:15378"/>
        <dbReference type="ChEBI" id="CHEBI:30616"/>
        <dbReference type="ChEBI" id="CHEBI:33019"/>
        <dbReference type="ChEBI" id="CHEBI:59967"/>
        <dbReference type="ChEBI" id="CHEBI:61593"/>
        <dbReference type="EC" id="2.7.7.70"/>
    </reaction>
</comment>
<comment type="pathway">
    <text evidence="1">Nucleotide-sugar biosynthesis; ADP-L-glycero-beta-D-manno-heptose biosynthesis; ADP-L-glycero-beta-D-manno-heptose from D-glycero-beta-D-manno-heptose 7-phosphate: step 1/4.</text>
</comment>
<comment type="pathway">
    <text evidence="1">Nucleotide-sugar biosynthesis; ADP-L-glycero-beta-D-manno-heptose biosynthesis; ADP-L-glycero-beta-D-manno-heptose from D-glycero-beta-D-manno-heptose 7-phosphate: step 3/4.</text>
</comment>
<comment type="subunit">
    <text evidence="1">Homodimer.</text>
</comment>
<comment type="similarity">
    <text evidence="1">In the N-terminal section; belongs to the carbohydrate kinase PfkB family.</text>
</comment>
<comment type="similarity">
    <text evidence="1">In the C-terminal section; belongs to the cytidylyltransferase family.</text>
</comment>
<dbReference type="EC" id="2.7.1.167" evidence="1"/>
<dbReference type="EC" id="2.7.7.70" evidence="1"/>
<dbReference type="EMBL" id="CP000075">
    <property type="protein sequence ID" value="AAY35607.1"/>
    <property type="molecule type" value="Genomic_DNA"/>
</dbReference>
<dbReference type="RefSeq" id="WP_003404685.1">
    <property type="nucleotide sequence ID" value="NC_007005.1"/>
</dbReference>
<dbReference type="RefSeq" id="YP_233645.1">
    <property type="nucleotide sequence ID" value="NC_007005.1"/>
</dbReference>
<dbReference type="SMR" id="Q4ZZ15"/>
<dbReference type="STRING" id="205918.Psyr_0537"/>
<dbReference type="GeneID" id="77276462"/>
<dbReference type="KEGG" id="psb:Psyr_0537"/>
<dbReference type="PATRIC" id="fig|205918.7.peg.559"/>
<dbReference type="eggNOG" id="COG0615">
    <property type="taxonomic scope" value="Bacteria"/>
</dbReference>
<dbReference type="eggNOG" id="COG2870">
    <property type="taxonomic scope" value="Bacteria"/>
</dbReference>
<dbReference type="HOGENOM" id="CLU_021150_2_1_6"/>
<dbReference type="OrthoDB" id="9802794at2"/>
<dbReference type="UniPathway" id="UPA00356">
    <property type="reaction ID" value="UER00437"/>
</dbReference>
<dbReference type="UniPathway" id="UPA00356">
    <property type="reaction ID" value="UER00439"/>
</dbReference>
<dbReference type="Proteomes" id="UP000000426">
    <property type="component" value="Chromosome"/>
</dbReference>
<dbReference type="GO" id="GO:0005829">
    <property type="term" value="C:cytosol"/>
    <property type="evidence" value="ECO:0007669"/>
    <property type="project" value="TreeGrafter"/>
</dbReference>
<dbReference type="GO" id="GO:0005524">
    <property type="term" value="F:ATP binding"/>
    <property type="evidence" value="ECO:0007669"/>
    <property type="project" value="UniProtKB-UniRule"/>
</dbReference>
<dbReference type="GO" id="GO:0033785">
    <property type="term" value="F:heptose 7-phosphate kinase activity"/>
    <property type="evidence" value="ECO:0007669"/>
    <property type="project" value="UniProtKB-UniRule"/>
</dbReference>
<dbReference type="GO" id="GO:0033786">
    <property type="term" value="F:heptose-1-phosphate adenylyltransferase activity"/>
    <property type="evidence" value="ECO:0007669"/>
    <property type="project" value="UniProtKB-UniRule"/>
</dbReference>
<dbReference type="GO" id="GO:0016773">
    <property type="term" value="F:phosphotransferase activity, alcohol group as acceptor"/>
    <property type="evidence" value="ECO:0007669"/>
    <property type="project" value="InterPro"/>
</dbReference>
<dbReference type="GO" id="GO:0097171">
    <property type="term" value="P:ADP-L-glycero-beta-D-manno-heptose biosynthetic process"/>
    <property type="evidence" value="ECO:0007669"/>
    <property type="project" value="UniProtKB-UniPathway"/>
</dbReference>
<dbReference type="CDD" id="cd01172">
    <property type="entry name" value="RfaE_like"/>
    <property type="match status" value="1"/>
</dbReference>
<dbReference type="FunFam" id="3.40.1190.20:FF:000002">
    <property type="entry name" value="Bifunctional protein HldE"/>
    <property type="match status" value="1"/>
</dbReference>
<dbReference type="FunFam" id="3.40.50.620:FF:000028">
    <property type="entry name" value="Bifunctional protein HldE"/>
    <property type="match status" value="1"/>
</dbReference>
<dbReference type="Gene3D" id="3.40.1190.20">
    <property type="match status" value="1"/>
</dbReference>
<dbReference type="Gene3D" id="3.40.50.620">
    <property type="entry name" value="HUPs"/>
    <property type="match status" value="1"/>
</dbReference>
<dbReference type="HAMAP" id="MF_01603">
    <property type="entry name" value="HldE"/>
    <property type="match status" value="1"/>
</dbReference>
<dbReference type="InterPro" id="IPR023030">
    <property type="entry name" value="Bifunc_HldE"/>
</dbReference>
<dbReference type="InterPro" id="IPR002173">
    <property type="entry name" value="Carboh/pur_kinase_PfkB_CS"/>
</dbReference>
<dbReference type="InterPro" id="IPR004821">
    <property type="entry name" value="Cyt_trans-like"/>
</dbReference>
<dbReference type="InterPro" id="IPR011611">
    <property type="entry name" value="PfkB_dom"/>
</dbReference>
<dbReference type="InterPro" id="IPR011913">
    <property type="entry name" value="RfaE_dom_I"/>
</dbReference>
<dbReference type="InterPro" id="IPR011914">
    <property type="entry name" value="RfaE_dom_II"/>
</dbReference>
<dbReference type="InterPro" id="IPR029056">
    <property type="entry name" value="Ribokinase-like"/>
</dbReference>
<dbReference type="InterPro" id="IPR014729">
    <property type="entry name" value="Rossmann-like_a/b/a_fold"/>
</dbReference>
<dbReference type="NCBIfam" id="TIGR00125">
    <property type="entry name" value="cyt_tran_rel"/>
    <property type="match status" value="1"/>
</dbReference>
<dbReference type="NCBIfam" id="NF008454">
    <property type="entry name" value="PRK11316.1"/>
    <property type="match status" value="1"/>
</dbReference>
<dbReference type="NCBIfam" id="TIGR02198">
    <property type="entry name" value="rfaE_dom_I"/>
    <property type="match status" value="1"/>
</dbReference>
<dbReference type="NCBIfam" id="TIGR02199">
    <property type="entry name" value="rfaE_dom_II"/>
    <property type="match status" value="1"/>
</dbReference>
<dbReference type="PANTHER" id="PTHR46969">
    <property type="entry name" value="BIFUNCTIONAL PROTEIN HLDE"/>
    <property type="match status" value="1"/>
</dbReference>
<dbReference type="PANTHER" id="PTHR46969:SF1">
    <property type="entry name" value="BIFUNCTIONAL PROTEIN HLDE"/>
    <property type="match status" value="1"/>
</dbReference>
<dbReference type="Pfam" id="PF01467">
    <property type="entry name" value="CTP_transf_like"/>
    <property type="match status" value="1"/>
</dbReference>
<dbReference type="Pfam" id="PF00294">
    <property type="entry name" value="PfkB"/>
    <property type="match status" value="1"/>
</dbReference>
<dbReference type="SUPFAM" id="SSF52374">
    <property type="entry name" value="Nucleotidylyl transferase"/>
    <property type="match status" value="1"/>
</dbReference>
<dbReference type="SUPFAM" id="SSF53613">
    <property type="entry name" value="Ribokinase-like"/>
    <property type="match status" value="1"/>
</dbReference>
<dbReference type="PROSITE" id="PS00583">
    <property type="entry name" value="PFKB_KINASES_1"/>
    <property type="match status" value="1"/>
</dbReference>
<gene>
    <name evidence="1" type="primary">hldE</name>
    <name type="ordered locus">Psyr_0537</name>
</gene>
<feature type="chain" id="PRO_0000255776" description="Bifunctional protein HldE">
    <location>
        <begin position="1"/>
        <end position="474"/>
    </location>
</feature>
<feature type="region of interest" description="Ribokinase">
    <location>
        <begin position="1"/>
        <end position="318"/>
    </location>
</feature>
<feature type="region of interest" description="Cytidylyltransferase">
    <location>
        <begin position="343"/>
        <end position="474"/>
    </location>
</feature>
<feature type="active site" evidence="1">
    <location>
        <position position="263"/>
    </location>
</feature>
<feature type="binding site" evidence="1">
    <location>
        <begin position="194"/>
        <end position="197"/>
    </location>
    <ligand>
        <name>ATP</name>
        <dbReference type="ChEBI" id="CHEBI:30616"/>
    </ligand>
</feature>
<accession>Q4ZZ15</accession>
<evidence type="ECO:0000255" key="1">
    <source>
        <dbReference type="HAMAP-Rule" id="MF_01603"/>
    </source>
</evidence>
<sequence length="474" mass="50314">MKLSMPRFDQAPVLVVGDVMLDRYWHGGTSRISPEAPVPVVKVDQIEDRPGGAANVALNIAALGAPASLVGVTGDDEAAESLTNSLKAAGVLARFQRIADQPTIVKLRVMSRHQQLLRIDFEEPFRTDPLALSAEVYSLLDGIKVLVLSDYGKGALKNHQALIQAARKRGIPVLADPKGKDFAIYRGASLITPNLSEFEAIVGHCVDEAQLVTKGAQLMQELDLGALLVTRGEHGMTLLRPDQQALHLPARAREVFDVTGAGDTVISTLAAAIAAGEELPHAVALANLAAGIVVGKLGTAAISAPELRRAIQREEGSERGVLGLEQLLLAVDDARAHKERIVFTNGCFDILHAGHVTYLEQARALGDRLIVAVNDDASVSRLKGPGRPINSVERRMAVLAGLGAVDWVISFPEGTPENLLTHVKPDVLVKGGDYGVDQVVGADIVQAYGGEVRVLGLVENSSTTAIVEKIRGQG</sequence>